<comment type="function">
    <text>Glutamate-gated receptor that probably acts as a non-selective cation channel. May be involved in light-signal transduction and calcium homeostasis via the regulation of calcium influx into cells.</text>
</comment>
<comment type="subunit">
    <text evidence="1">May form heteromers.</text>
</comment>
<comment type="subcellular location">
    <subcellularLocation>
        <location>Membrane</location>
        <topology>Multi-pass membrane protein</topology>
    </subcellularLocation>
</comment>
<comment type="tissue specificity">
    <text evidence="3">Expressed predominantly in roots.</text>
</comment>
<comment type="similarity">
    <text evidence="4">Belongs to the glutamate-gated ion channel (TC 1.A.10.1) family.</text>
</comment>
<reference key="1">
    <citation type="journal article" date="2002" name="Mol. Biol. Evol.">
        <title>Phylogenetic and expression analysis of the glutamate-receptor-like gene family in Arabidopsis thaliana.</title>
        <authorList>
            <person name="Chiu J.C."/>
            <person name="Brenner E.D."/>
            <person name="DeSalle R."/>
            <person name="Nitabach M.N."/>
            <person name="Holmes T.C."/>
            <person name="Coruzzi G.M."/>
        </authorList>
    </citation>
    <scope>NUCLEOTIDE SEQUENCE [MRNA]</scope>
    <scope>TISSUE SPECIFICITY</scope>
    <source>
        <strain>cv. Columbia</strain>
    </source>
</reference>
<reference key="2">
    <citation type="journal article" date="1999" name="Nature">
        <title>Sequence and analysis of chromosome 2 of the plant Arabidopsis thaliana.</title>
        <authorList>
            <person name="Lin X."/>
            <person name="Kaul S."/>
            <person name="Rounsley S.D."/>
            <person name="Shea T.P."/>
            <person name="Benito M.-I."/>
            <person name="Town C.D."/>
            <person name="Fujii C.Y."/>
            <person name="Mason T.M."/>
            <person name="Bowman C.L."/>
            <person name="Barnstead M.E."/>
            <person name="Feldblyum T.V."/>
            <person name="Buell C.R."/>
            <person name="Ketchum K.A."/>
            <person name="Lee J.J."/>
            <person name="Ronning C.M."/>
            <person name="Koo H.L."/>
            <person name="Moffat K.S."/>
            <person name="Cronin L.A."/>
            <person name="Shen M."/>
            <person name="Pai G."/>
            <person name="Van Aken S."/>
            <person name="Umayam L."/>
            <person name="Tallon L.J."/>
            <person name="Gill J.E."/>
            <person name="Adams M.D."/>
            <person name="Carrera A.J."/>
            <person name="Creasy T.H."/>
            <person name="Goodman H.M."/>
            <person name="Somerville C.R."/>
            <person name="Copenhaver G.P."/>
            <person name="Preuss D."/>
            <person name="Nierman W.C."/>
            <person name="White O."/>
            <person name="Eisen J.A."/>
            <person name="Salzberg S.L."/>
            <person name="Fraser C.M."/>
            <person name="Venter J.C."/>
        </authorList>
    </citation>
    <scope>NUCLEOTIDE SEQUENCE [LARGE SCALE GENOMIC DNA]</scope>
    <source>
        <strain>cv. Columbia</strain>
    </source>
</reference>
<reference key="3">
    <citation type="journal article" date="2017" name="Plant J.">
        <title>Araport11: a complete reannotation of the Arabidopsis thaliana reference genome.</title>
        <authorList>
            <person name="Cheng C.Y."/>
            <person name="Krishnakumar V."/>
            <person name="Chan A.P."/>
            <person name="Thibaud-Nissen F."/>
            <person name="Schobel S."/>
            <person name="Town C.D."/>
        </authorList>
    </citation>
    <scope>GENOME REANNOTATION</scope>
    <source>
        <strain>cv. Columbia</strain>
    </source>
</reference>
<reference key="4">
    <citation type="journal article" date="2001" name="Science">
        <title>The identity of plant glutamate receptors.</title>
        <authorList>
            <person name="Lacombe B."/>
            <person name="Becker D."/>
            <person name="Hedrich R."/>
            <person name="DeSalle R."/>
            <person name="Hollmann M."/>
            <person name="Kwak J.M."/>
            <person name="Schroeder J.I."/>
            <person name="Le Novere N."/>
            <person name="Nam H.G."/>
            <person name="Spalding E.P."/>
            <person name="Tester M."/>
            <person name="Turano F.J."/>
            <person name="Chiu J."/>
            <person name="Coruzzi G."/>
        </authorList>
    </citation>
    <scope>GENE FAMILY</scope>
    <scope>NOMENCLATURE</scope>
</reference>
<evidence type="ECO:0000250" key="1"/>
<evidence type="ECO:0000255" key="2"/>
<evidence type="ECO:0000269" key="3">
    <source>
    </source>
</evidence>
<evidence type="ECO:0000305" key="4"/>
<proteinExistence type="evidence at transcript level"/>
<organism>
    <name type="scientific">Arabidopsis thaliana</name>
    <name type="common">Mouse-ear cress</name>
    <dbReference type="NCBI Taxonomy" id="3702"/>
    <lineage>
        <taxon>Eukaryota</taxon>
        <taxon>Viridiplantae</taxon>
        <taxon>Streptophyta</taxon>
        <taxon>Embryophyta</taxon>
        <taxon>Tracheophyta</taxon>
        <taxon>Spermatophyta</taxon>
        <taxon>Magnoliopsida</taxon>
        <taxon>eudicotyledons</taxon>
        <taxon>Gunneridae</taxon>
        <taxon>Pentapetalae</taxon>
        <taxon>rosids</taxon>
        <taxon>malvids</taxon>
        <taxon>Brassicales</taxon>
        <taxon>Brassicaceae</taxon>
        <taxon>Camelineae</taxon>
        <taxon>Arabidopsis</taxon>
    </lineage>
</organism>
<keyword id="KW-0325">Glycoprotein</keyword>
<keyword id="KW-0407">Ion channel</keyword>
<keyword id="KW-0406">Ion transport</keyword>
<keyword id="KW-1071">Ligand-gated ion channel</keyword>
<keyword id="KW-0472">Membrane</keyword>
<keyword id="KW-0675">Receptor</keyword>
<keyword id="KW-1185">Reference proteome</keyword>
<keyword id="KW-0732">Signal</keyword>
<keyword id="KW-0812">Transmembrane</keyword>
<keyword id="KW-1133">Transmembrane helix</keyword>
<keyword id="KW-0813">Transport</keyword>
<protein>
    <recommendedName>
        <fullName>Glutamate receptor 2.2</fullName>
    </recommendedName>
    <alternativeName>
        <fullName>Ligand-gated ion channel 2.2</fullName>
    </alternativeName>
</protein>
<feature type="signal peptide" evidence="2">
    <location>
        <begin position="1"/>
        <end position="24"/>
    </location>
</feature>
<feature type="chain" id="PRO_0000011597" description="Glutamate receptor 2.2">
    <location>
        <begin position="25"/>
        <end position="920"/>
    </location>
</feature>
<feature type="topological domain" description="Extracellular" evidence="2">
    <location>
        <begin position="25"/>
        <end position="580"/>
    </location>
</feature>
<feature type="transmembrane region" description="Helical" evidence="2">
    <location>
        <begin position="581"/>
        <end position="601"/>
    </location>
</feature>
<feature type="topological domain" description="Cytoplasmic" evidence="2">
    <location>
        <begin position="602"/>
        <end position="610"/>
    </location>
</feature>
<feature type="transmembrane region" description="Helical" evidence="2">
    <location>
        <begin position="611"/>
        <end position="631"/>
    </location>
</feature>
<feature type="topological domain" description="Cytoplasmic" evidence="2">
    <location>
        <begin position="632"/>
        <end position="635"/>
    </location>
</feature>
<feature type="transmembrane region" description="Helical" evidence="2">
    <location>
        <begin position="636"/>
        <end position="656"/>
    </location>
</feature>
<feature type="topological domain" description="Extracellular" evidence="2">
    <location>
        <begin position="657"/>
        <end position="830"/>
    </location>
</feature>
<feature type="transmembrane region" description="Helical" evidence="2">
    <location>
        <begin position="831"/>
        <end position="851"/>
    </location>
</feature>
<feature type="topological domain" description="Cytoplasmic" evidence="2">
    <location>
        <begin position="852"/>
        <end position="920"/>
    </location>
</feature>
<feature type="glycosylation site" description="N-linked (GlcNAc...) asparagine" evidence="2">
    <location>
        <position position="53"/>
    </location>
</feature>
<feature type="glycosylation site" description="N-linked (GlcNAc...) asparagine" evidence="2">
    <location>
        <position position="204"/>
    </location>
</feature>
<feature type="glycosylation site" description="N-linked (GlcNAc...) asparagine" evidence="2">
    <location>
        <position position="267"/>
    </location>
</feature>
<feature type="glycosylation site" description="N-linked (GlcNAc...) asparagine" evidence="2">
    <location>
        <position position="331"/>
    </location>
</feature>
<feature type="glycosylation site" description="N-linked (GlcNAc...) asparagine" evidence="2">
    <location>
        <position position="342"/>
    </location>
</feature>
<feature type="glycosylation site" description="N-linked (GlcNAc...) asparagine" evidence="2">
    <location>
        <position position="477"/>
    </location>
</feature>
<feature type="glycosylation site" description="N-linked (GlcNAc...) asparagine" evidence="2">
    <location>
        <position position="542"/>
    </location>
</feature>
<feature type="glycosylation site" description="N-linked (GlcNAc...) asparagine" evidence="2">
    <location>
        <position position="702"/>
    </location>
</feature>
<sequence length="920" mass="102847">MKNSKLFFRFLFLFFFFCLESSRGQDNGKTQVNIGVVSDVGTSYPDVAMLCINMSLADFYSSRPQFQTRLVVNVGDSKNDVVGAATAAIDLIKNKQVKAILGPWTSMQAHFLIEIGQKSRVPVVSYSATSPSLTSLRSPYFFRATYEDSSQVHAIKAIIKLFGWREVVPVYIDNTFGEGIMPRLTDSLQDINVRIPYRSVIPLNATDQDISVELLKMMNMPTRVFIVHMSSSLASTVFIKAKELGLMKPGYVWILTNGVMDGLRSINETGIEAMEGVLGIKTYIPKSKDLETFRSRWKRRFPQMELNVYGLWAYDATTALAMAIEDAGINNMTFSNVDTGKNVSELDGLGLSQFGPKLLQTVSTVQFKGLAGDFHFVSGQLQPSVFEIVNMIGTGERSIGFWTEGNGLVKKLDQEPRSIGTLSTWPDHLKHIIWPGEAVSVPKGWEIPTNGKKLRIGVPKRIGFTDLVKVTRDPITNSTVVKGFCIDFFEAVIQAMPYDVSYEFFPFEKPNGEPAGNHNDLVHQVYLGQFDAVVGDTTILANRSSFVDFTLPFMKSGVGLIVPLKDEVKRDKFSFLKPLSIELWLTTLVFFFLVGISVWTLEHRVNSDFRGPANYQASTIFWFAFSTMVFAPRERVLSFGARSLVVTWYFVLLVLTQSYTASLASLLTSQQLNPTITSMSSLLHRGETVGYQRTSFILGKLNETGFPQSSLVPFDTAEECDELLKKGPKNGGVAAAFLGTPYVRLFLGQYCNTYKMVEEPFNVDGFGFVFPIGSPLVADVSRAILKVAESPKAVELEHAWFKKKEQSCPDPVTNPDSNPTVTAIQLGVGSFWFLFLVVFVVCVLALGKFTFCFLWKTKGKDLWKEFLKRDTDSYINDIEKCLCSQEMPENSNKATNQTNYGMELRVRNIVQVNQTDPDCL</sequence>
<gene>
    <name type="primary">GLR2.2</name>
    <name type="ordered locus">At2g24720</name>
    <name type="ORF">F27A10.3</name>
</gene>
<dbReference type="EMBL" id="AY072068">
    <property type="protein sequence ID" value="AAL61997.1"/>
    <property type="molecule type" value="mRNA"/>
</dbReference>
<dbReference type="EMBL" id="AC007266">
    <property type="protein sequence ID" value="AAD26895.1"/>
    <property type="molecule type" value="Genomic_DNA"/>
</dbReference>
<dbReference type="EMBL" id="CP002685">
    <property type="protein sequence ID" value="AEC07622.1"/>
    <property type="molecule type" value="Genomic_DNA"/>
</dbReference>
<dbReference type="PIR" id="B84640">
    <property type="entry name" value="B84640"/>
</dbReference>
<dbReference type="RefSeq" id="NP_180048.1">
    <property type="nucleotide sequence ID" value="NM_128033.2"/>
</dbReference>
<dbReference type="SMR" id="Q9SHV1"/>
<dbReference type="BioGRID" id="2360">
    <property type="interactions" value="7"/>
</dbReference>
<dbReference type="FunCoup" id="Q9SHV1">
    <property type="interactions" value="148"/>
</dbReference>
<dbReference type="IntAct" id="Q9SHV1">
    <property type="interactions" value="1"/>
</dbReference>
<dbReference type="STRING" id="3702.Q9SHV1"/>
<dbReference type="GlyCosmos" id="Q9SHV1">
    <property type="glycosylation" value="8 sites, No reported glycans"/>
</dbReference>
<dbReference type="GlyGen" id="Q9SHV1">
    <property type="glycosylation" value="8 sites"/>
</dbReference>
<dbReference type="iPTMnet" id="Q9SHV1"/>
<dbReference type="PaxDb" id="3702-AT2G24720.1"/>
<dbReference type="ProteomicsDB" id="247399"/>
<dbReference type="EnsemblPlants" id="AT2G24720.1">
    <property type="protein sequence ID" value="AT2G24720.1"/>
    <property type="gene ID" value="AT2G24720"/>
</dbReference>
<dbReference type="GeneID" id="817008"/>
<dbReference type="Gramene" id="AT2G24720.1">
    <property type="protein sequence ID" value="AT2G24720.1"/>
    <property type="gene ID" value="AT2G24720"/>
</dbReference>
<dbReference type="KEGG" id="ath:AT2G24720"/>
<dbReference type="Araport" id="AT2G24720"/>
<dbReference type="TAIR" id="AT2G24720">
    <property type="gene designation" value="GLR2.2"/>
</dbReference>
<dbReference type="eggNOG" id="KOG1052">
    <property type="taxonomic scope" value="Eukaryota"/>
</dbReference>
<dbReference type="HOGENOM" id="CLU_007358_0_2_1"/>
<dbReference type="InParanoid" id="Q9SHV1"/>
<dbReference type="OMA" id="VNCIASM"/>
<dbReference type="PhylomeDB" id="Q9SHV1"/>
<dbReference type="PRO" id="PR:Q9SHV1"/>
<dbReference type="Proteomes" id="UP000006548">
    <property type="component" value="Chromosome 2"/>
</dbReference>
<dbReference type="ExpressionAtlas" id="Q9SHV1">
    <property type="expression patterns" value="baseline and differential"/>
</dbReference>
<dbReference type="GO" id="GO:0005886">
    <property type="term" value="C:plasma membrane"/>
    <property type="evidence" value="ECO:0000250"/>
    <property type="project" value="UniProtKB"/>
</dbReference>
<dbReference type="GO" id="GO:0005262">
    <property type="term" value="F:calcium channel activity"/>
    <property type="evidence" value="ECO:0000250"/>
    <property type="project" value="UniProtKB"/>
</dbReference>
<dbReference type="GO" id="GO:0008066">
    <property type="term" value="F:glutamate receptor activity"/>
    <property type="evidence" value="ECO:0000250"/>
    <property type="project" value="UniProtKB"/>
</dbReference>
<dbReference type="GO" id="GO:0015276">
    <property type="term" value="F:ligand-gated monoatomic ion channel activity"/>
    <property type="evidence" value="ECO:0007669"/>
    <property type="project" value="InterPro"/>
</dbReference>
<dbReference type="GO" id="GO:0006816">
    <property type="term" value="P:calcium ion transport"/>
    <property type="evidence" value="ECO:0000250"/>
    <property type="project" value="UniProtKB"/>
</dbReference>
<dbReference type="GO" id="GO:0019722">
    <property type="term" value="P:calcium-mediated signaling"/>
    <property type="evidence" value="ECO:0000250"/>
    <property type="project" value="UniProtKB"/>
</dbReference>
<dbReference type="GO" id="GO:0071230">
    <property type="term" value="P:cellular response to amino acid stimulus"/>
    <property type="evidence" value="ECO:0000250"/>
    <property type="project" value="UniProtKB"/>
</dbReference>
<dbReference type="CDD" id="cd13686">
    <property type="entry name" value="GluR_Plant"/>
    <property type="match status" value="1"/>
</dbReference>
<dbReference type="CDD" id="cd19990">
    <property type="entry name" value="PBP1_GABAb_receptor_plant"/>
    <property type="match status" value="1"/>
</dbReference>
<dbReference type="FunFam" id="1.10.287.70:FF:000037">
    <property type="entry name" value="Glutamate receptor"/>
    <property type="match status" value="1"/>
</dbReference>
<dbReference type="FunFam" id="3.40.190.10:FF:000103">
    <property type="entry name" value="Glutamate receptor"/>
    <property type="match status" value="1"/>
</dbReference>
<dbReference type="FunFam" id="3.40.50.2300:FF:000169">
    <property type="entry name" value="Glutamate receptor"/>
    <property type="match status" value="1"/>
</dbReference>
<dbReference type="FunFam" id="3.40.50.2300:FF:000310">
    <property type="entry name" value="Glutamate receptor"/>
    <property type="match status" value="1"/>
</dbReference>
<dbReference type="FunFam" id="3.40.50.2300:FF:000398">
    <property type="entry name" value="Glutamate receptor"/>
    <property type="match status" value="1"/>
</dbReference>
<dbReference type="FunFam" id="3.40.190.10:FF:000276">
    <property type="entry name" value="Glutamate receptor 2.3"/>
    <property type="match status" value="1"/>
</dbReference>
<dbReference type="Gene3D" id="1.10.287.70">
    <property type="match status" value="1"/>
</dbReference>
<dbReference type="Gene3D" id="3.40.50.2300">
    <property type="match status" value="3"/>
</dbReference>
<dbReference type="Gene3D" id="3.40.190.10">
    <property type="entry name" value="Periplasmic binding protein-like II"/>
    <property type="match status" value="2"/>
</dbReference>
<dbReference type="InterPro" id="IPR001828">
    <property type="entry name" value="ANF_lig-bd_rcpt"/>
</dbReference>
<dbReference type="InterPro" id="IPR044440">
    <property type="entry name" value="GABAb_receptor_plant_PBP1"/>
</dbReference>
<dbReference type="InterPro" id="IPR019594">
    <property type="entry name" value="Glu/Gly-bd"/>
</dbReference>
<dbReference type="InterPro" id="IPR015683">
    <property type="entry name" value="Ionotropic_Glu_rcpt"/>
</dbReference>
<dbReference type="InterPro" id="IPR001320">
    <property type="entry name" value="Iontro_rcpt_C"/>
</dbReference>
<dbReference type="InterPro" id="IPR017103">
    <property type="entry name" value="Iontropic_Glu_rcpt_pln"/>
</dbReference>
<dbReference type="InterPro" id="IPR028082">
    <property type="entry name" value="Peripla_BP_I"/>
</dbReference>
<dbReference type="PANTHER" id="PTHR34836">
    <property type="entry name" value="OS06G0188250 PROTEIN"/>
    <property type="match status" value="1"/>
</dbReference>
<dbReference type="PANTHER" id="PTHR34836:SF1">
    <property type="entry name" value="OS09G0428600 PROTEIN"/>
    <property type="match status" value="1"/>
</dbReference>
<dbReference type="Pfam" id="PF01094">
    <property type="entry name" value="ANF_receptor"/>
    <property type="match status" value="1"/>
</dbReference>
<dbReference type="Pfam" id="PF00060">
    <property type="entry name" value="Lig_chan"/>
    <property type="match status" value="1"/>
</dbReference>
<dbReference type="Pfam" id="PF10613">
    <property type="entry name" value="Lig_chan-Glu_bd"/>
    <property type="match status" value="1"/>
</dbReference>
<dbReference type="PIRSF" id="PIRSF037090">
    <property type="entry name" value="Iontro_Glu-like_rcpt_pln"/>
    <property type="match status" value="1"/>
</dbReference>
<dbReference type="SMART" id="SM00079">
    <property type="entry name" value="PBPe"/>
    <property type="match status" value="1"/>
</dbReference>
<dbReference type="SUPFAM" id="SSF53822">
    <property type="entry name" value="Periplasmic binding protein-like I"/>
    <property type="match status" value="1"/>
</dbReference>
<dbReference type="SUPFAM" id="SSF53850">
    <property type="entry name" value="Periplasmic binding protein-like II"/>
    <property type="match status" value="1"/>
</dbReference>
<name>GLR22_ARATH</name>
<accession>Q9SHV1</accession>